<protein>
    <recommendedName>
        <fullName evidence="1">UPF0235 protein RPR_04990</fullName>
    </recommendedName>
</protein>
<dbReference type="EMBL" id="CP001227">
    <property type="protein sequence ID" value="ACR47634.1"/>
    <property type="molecule type" value="Genomic_DNA"/>
</dbReference>
<dbReference type="RefSeq" id="WP_012736845.1">
    <property type="nucleotide sequence ID" value="NC_012730.1"/>
</dbReference>
<dbReference type="SMR" id="C4K236"/>
<dbReference type="KEGG" id="rpk:RPR_04990"/>
<dbReference type="HOGENOM" id="CLU_130694_6_2_5"/>
<dbReference type="Proteomes" id="UP000005015">
    <property type="component" value="Chromosome"/>
</dbReference>
<dbReference type="GO" id="GO:0005737">
    <property type="term" value="C:cytoplasm"/>
    <property type="evidence" value="ECO:0007669"/>
    <property type="project" value="TreeGrafter"/>
</dbReference>
<dbReference type="Gene3D" id="3.30.1200.10">
    <property type="entry name" value="YggU-like"/>
    <property type="match status" value="1"/>
</dbReference>
<dbReference type="HAMAP" id="MF_00634">
    <property type="entry name" value="UPF0235"/>
    <property type="match status" value="1"/>
</dbReference>
<dbReference type="InterPro" id="IPR003746">
    <property type="entry name" value="DUF167"/>
</dbReference>
<dbReference type="InterPro" id="IPR036591">
    <property type="entry name" value="YggU-like_sf"/>
</dbReference>
<dbReference type="NCBIfam" id="TIGR00251">
    <property type="entry name" value="DUF167 family protein"/>
    <property type="match status" value="1"/>
</dbReference>
<dbReference type="NCBIfam" id="NF002419">
    <property type="entry name" value="PRK01530.1"/>
    <property type="match status" value="1"/>
</dbReference>
<dbReference type="PANTHER" id="PTHR13420">
    <property type="entry name" value="UPF0235 PROTEIN C15ORF40"/>
    <property type="match status" value="1"/>
</dbReference>
<dbReference type="PANTHER" id="PTHR13420:SF7">
    <property type="entry name" value="UPF0235 PROTEIN C15ORF40"/>
    <property type="match status" value="1"/>
</dbReference>
<dbReference type="Pfam" id="PF02594">
    <property type="entry name" value="DUF167"/>
    <property type="match status" value="1"/>
</dbReference>
<dbReference type="SMART" id="SM01152">
    <property type="entry name" value="DUF167"/>
    <property type="match status" value="1"/>
</dbReference>
<dbReference type="SUPFAM" id="SSF69786">
    <property type="entry name" value="YggU-like"/>
    <property type="match status" value="1"/>
</dbReference>
<accession>C4K236</accession>
<sequence length="105" mass="12266">MDKFYNYNSSSHQALLSFKVKPNSKQNLISNFVIINNIPYLKLSIKAIPEQGKANEEIINYLAKEWKLSRSNIEIIKGHTHSLKTILIKNINEDYLNWIINSYIK</sequence>
<feature type="chain" id="PRO_1000212356" description="UPF0235 protein RPR_04990">
    <location>
        <begin position="1"/>
        <end position="105"/>
    </location>
</feature>
<gene>
    <name type="ordered locus">RPR_04990</name>
</gene>
<proteinExistence type="inferred from homology"/>
<comment type="similarity">
    <text evidence="1">Belongs to the UPF0235 family.</text>
</comment>
<name>Y4990_RICPU</name>
<evidence type="ECO:0000255" key="1">
    <source>
        <dbReference type="HAMAP-Rule" id="MF_00634"/>
    </source>
</evidence>
<organism>
    <name type="scientific">Rickettsia peacockii (strain Rustic)</name>
    <dbReference type="NCBI Taxonomy" id="562019"/>
    <lineage>
        <taxon>Bacteria</taxon>
        <taxon>Pseudomonadati</taxon>
        <taxon>Pseudomonadota</taxon>
        <taxon>Alphaproteobacteria</taxon>
        <taxon>Rickettsiales</taxon>
        <taxon>Rickettsiaceae</taxon>
        <taxon>Rickettsieae</taxon>
        <taxon>Rickettsia</taxon>
        <taxon>spotted fever group</taxon>
    </lineage>
</organism>
<reference key="1">
    <citation type="journal article" date="2009" name="PLoS ONE">
        <title>Genome sequence of the endosymbiont Rickettsia peacockii and comparison with virulent Rickettsia rickettsii: identification of virulence factors.</title>
        <authorList>
            <person name="Felsheim R.F."/>
            <person name="Kurtti T.J."/>
            <person name="Munderloh U.G."/>
        </authorList>
    </citation>
    <scope>NUCLEOTIDE SEQUENCE [LARGE SCALE GENOMIC DNA]</scope>
    <source>
        <strain>Rustic</strain>
    </source>
</reference>